<name>KAD_HELPS</name>
<organism>
    <name type="scientific">Helicobacter pylori (strain Shi470)</name>
    <dbReference type="NCBI Taxonomy" id="512562"/>
    <lineage>
        <taxon>Bacteria</taxon>
        <taxon>Pseudomonadati</taxon>
        <taxon>Campylobacterota</taxon>
        <taxon>Epsilonproteobacteria</taxon>
        <taxon>Campylobacterales</taxon>
        <taxon>Helicobacteraceae</taxon>
        <taxon>Helicobacter</taxon>
    </lineage>
</organism>
<protein>
    <recommendedName>
        <fullName evidence="1">Adenylate kinase</fullName>
        <shortName evidence="1">AK</shortName>
        <ecNumber evidence="1">2.7.4.3</ecNumber>
    </recommendedName>
    <alternativeName>
        <fullName evidence="1">ATP-AMP transphosphorylase</fullName>
    </alternativeName>
    <alternativeName>
        <fullName evidence="1">ATP:AMP phosphotransferase</fullName>
    </alternativeName>
    <alternativeName>
        <fullName evidence="1">Adenylate monophosphate kinase</fullName>
    </alternativeName>
</protein>
<comment type="function">
    <text evidence="1">Catalyzes the reversible transfer of the terminal phosphate group between ATP and AMP. Plays an important role in cellular energy homeostasis and in adenine nucleotide metabolism.</text>
</comment>
<comment type="catalytic activity">
    <reaction evidence="1">
        <text>AMP + ATP = 2 ADP</text>
        <dbReference type="Rhea" id="RHEA:12973"/>
        <dbReference type="ChEBI" id="CHEBI:30616"/>
        <dbReference type="ChEBI" id="CHEBI:456215"/>
        <dbReference type="ChEBI" id="CHEBI:456216"/>
        <dbReference type="EC" id="2.7.4.3"/>
    </reaction>
</comment>
<comment type="pathway">
    <text evidence="1">Purine metabolism; AMP biosynthesis via salvage pathway; AMP from ADP: step 1/1.</text>
</comment>
<comment type="subunit">
    <text evidence="1">Monomer.</text>
</comment>
<comment type="subcellular location">
    <subcellularLocation>
        <location evidence="1">Cytoplasm</location>
    </subcellularLocation>
</comment>
<comment type="domain">
    <text evidence="1">Consists of three domains, a large central CORE domain and two small peripheral domains, NMPbind and LID, which undergo movements during catalysis. The LID domain closes over the site of phosphoryl transfer upon ATP binding. Assembling and dissambling the active center during each catalytic cycle provides an effective means to prevent ATP hydrolysis.</text>
</comment>
<comment type="similarity">
    <text evidence="1">Belongs to the adenylate kinase family.</text>
</comment>
<keyword id="KW-0067">ATP-binding</keyword>
<keyword id="KW-0963">Cytoplasm</keyword>
<keyword id="KW-0418">Kinase</keyword>
<keyword id="KW-0545">Nucleotide biosynthesis</keyword>
<keyword id="KW-0547">Nucleotide-binding</keyword>
<keyword id="KW-0808">Transferase</keyword>
<proteinExistence type="inferred from homology"/>
<evidence type="ECO:0000255" key="1">
    <source>
        <dbReference type="HAMAP-Rule" id="MF_00235"/>
    </source>
</evidence>
<dbReference type="EC" id="2.7.4.3" evidence="1"/>
<dbReference type="EMBL" id="CP001072">
    <property type="protein sequence ID" value="ACD48191.1"/>
    <property type="molecule type" value="Genomic_DNA"/>
</dbReference>
<dbReference type="RefSeq" id="WP_000811191.1">
    <property type="nucleotide sequence ID" value="NC_010698.2"/>
</dbReference>
<dbReference type="SMR" id="B2UTK9"/>
<dbReference type="KEGG" id="hps:HPSH_03780"/>
<dbReference type="HOGENOM" id="CLU_032354_4_1_7"/>
<dbReference type="UniPathway" id="UPA00588">
    <property type="reaction ID" value="UER00649"/>
</dbReference>
<dbReference type="GO" id="GO:0005737">
    <property type="term" value="C:cytoplasm"/>
    <property type="evidence" value="ECO:0007669"/>
    <property type="project" value="UniProtKB-SubCell"/>
</dbReference>
<dbReference type="GO" id="GO:0004017">
    <property type="term" value="F:adenylate kinase activity"/>
    <property type="evidence" value="ECO:0007669"/>
    <property type="project" value="UniProtKB-UniRule"/>
</dbReference>
<dbReference type="GO" id="GO:0005524">
    <property type="term" value="F:ATP binding"/>
    <property type="evidence" value="ECO:0007669"/>
    <property type="project" value="UniProtKB-UniRule"/>
</dbReference>
<dbReference type="GO" id="GO:0044209">
    <property type="term" value="P:AMP salvage"/>
    <property type="evidence" value="ECO:0007669"/>
    <property type="project" value="UniProtKB-UniRule"/>
</dbReference>
<dbReference type="CDD" id="cd01428">
    <property type="entry name" value="ADK"/>
    <property type="match status" value="1"/>
</dbReference>
<dbReference type="Gene3D" id="3.40.50.300">
    <property type="entry name" value="P-loop containing nucleotide triphosphate hydrolases"/>
    <property type="match status" value="1"/>
</dbReference>
<dbReference type="HAMAP" id="MF_00235">
    <property type="entry name" value="Adenylate_kinase_Adk"/>
    <property type="match status" value="1"/>
</dbReference>
<dbReference type="InterPro" id="IPR000850">
    <property type="entry name" value="Adenylat/UMP-CMP_kin"/>
</dbReference>
<dbReference type="InterPro" id="IPR033690">
    <property type="entry name" value="Adenylat_kinase_CS"/>
</dbReference>
<dbReference type="InterPro" id="IPR027417">
    <property type="entry name" value="P-loop_NTPase"/>
</dbReference>
<dbReference type="NCBIfam" id="NF001384">
    <property type="entry name" value="PRK00279.2-2"/>
    <property type="match status" value="1"/>
</dbReference>
<dbReference type="PANTHER" id="PTHR23359">
    <property type="entry name" value="NUCLEOTIDE KINASE"/>
    <property type="match status" value="1"/>
</dbReference>
<dbReference type="Pfam" id="PF00406">
    <property type="entry name" value="ADK"/>
    <property type="match status" value="1"/>
</dbReference>
<dbReference type="PRINTS" id="PR00094">
    <property type="entry name" value="ADENYLTKNASE"/>
</dbReference>
<dbReference type="SUPFAM" id="SSF52540">
    <property type="entry name" value="P-loop containing nucleoside triphosphate hydrolases"/>
    <property type="match status" value="1"/>
</dbReference>
<dbReference type="PROSITE" id="PS00113">
    <property type="entry name" value="ADENYLATE_KINASE"/>
    <property type="match status" value="1"/>
</dbReference>
<gene>
    <name evidence="1" type="primary">adk</name>
    <name type="ordered locus">HPSH_03780</name>
</gene>
<feature type="chain" id="PRO_1000100571" description="Adenylate kinase">
    <location>
        <begin position="1"/>
        <end position="191"/>
    </location>
</feature>
<feature type="region of interest" description="NMP" evidence="1">
    <location>
        <begin position="34"/>
        <end position="63"/>
    </location>
</feature>
<feature type="region of interest" description="LID" evidence="1">
    <location>
        <begin position="130"/>
        <end position="136"/>
    </location>
</feature>
<feature type="binding site" evidence="1">
    <location>
        <begin position="12"/>
        <end position="17"/>
    </location>
    <ligand>
        <name>ATP</name>
        <dbReference type="ChEBI" id="CHEBI:30616"/>
    </ligand>
</feature>
<feature type="binding site" evidence="1">
    <location>
        <position position="35"/>
    </location>
    <ligand>
        <name>AMP</name>
        <dbReference type="ChEBI" id="CHEBI:456215"/>
    </ligand>
</feature>
<feature type="binding site" evidence="1">
    <location>
        <position position="40"/>
    </location>
    <ligand>
        <name>AMP</name>
        <dbReference type="ChEBI" id="CHEBI:456215"/>
    </ligand>
</feature>
<feature type="binding site" evidence="1">
    <location>
        <begin position="61"/>
        <end position="63"/>
    </location>
    <ligand>
        <name>AMP</name>
        <dbReference type="ChEBI" id="CHEBI:456215"/>
    </ligand>
</feature>
<feature type="binding site" evidence="1">
    <location>
        <begin position="88"/>
        <end position="91"/>
    </location>
    <ligand>
        <name>AMP</name>
        <dbReference type="ChEBI" id="CHEBI:456215"/>
    </ligand>
</feature>
<feature type="binding site" evidence="1">
    <location>
        <position position="95"/>
    </location>
    <ligand>
        <name>AMP</name>
        <dbReference type="ChEBI" id="CHEBI:456215"/>
    </ligand>
</feature>
<feature type="binding site" evidence="1">
    <location>
        <position position="131"/>
    </location>
    <ligand>
        <name>ATP</name>
        <dbReference type="ChEBI" id="CHEBI:30616"/>
    </ligand>
</feature>
<feature type="binding site" evidence="1">
    <location>
        <position position="133"/>
    </location>
    <ligand>
        <name>AMP</name>
        <dbReference type="ChEBI" id="CHEBI:456215"/>
    </ligand>
</feature>
<feature type="binding site" evidence="1">
    <location>
        <position position="145"/>
    </location>
    <ligand>
        <name>AMP</name>
        <dbReference type="ChEBI" id="CHEBI:456215"/>
    </ligand>
</feature>
<feature type="binding site" evidence="1">
    <location>
        <position position="173"/>
    </location>
    <ligand>
        <name>ATP</name>
        <dbReference type="ChEBI" id="CHEBI:30616"/>
    </ligand>
</feature>
<sequence length="191" mass="21369">MKQLFLIIGAPGSGKTTDAELIAKNNSEKIAHFSTGDLLRAESAKKTERGLLIEKFTSQGELVPLEIVVETILSAIKSSDKGIILIDGYPRSVEQMQALDKELSAQNEVVLKSVIEVEVSENTAKERVLGRSRGADDNEMVFHNRMRVFLDPLGEIQNFYKNKKVYKAINGERSIEEIVHEMQEYILSFGN</sequence>
<reference key="1">
    <citation type="submission" date="2008-05" db="EMBL/GenBank/DDBJ databases">
        <title>Genome sequence of Helicobacter pylori from the remote Amazon: traces of Asian ancestry of the first Americans.</title>
        <authorList>
            <person name="Kersulyte D."/>
            <person name="Kalia A."/>
            <person name="Gilman R.H."/>
            <person name="Berg D.E."/>
        </authorList>
    </citation>
    <scope>NUCLEOTIDE SEQUENCE [LARGE SCALE GENOMIC DNA]</scope>
    <source>
        <strain>Shi470</strain>
    </source>
</reference>
<accession>B2UTK9</accession>